<organism>
    <name type="scientific">Rattus norvegicus</name>
    <name type="common">Rat</name>
    <dbReference type="NCBI Taxonomy" id="10116"/>
    <lineage>
        <taxon>Eukaryota</taxon>
        <taxon>Metazoa</taxon>
        <taxon>Chordata</taxon>
        <taxon>Craniata</taxon>
        <taxon>Vertebrata</taxon>
        <taxon>Euteleostomi</taxon>
        <taxon>Mammalia</taxon>
        <taxon>Eutheria</taxon>
        <taxon>Euarchontoglires</taxon>
        <taxon>Glires</taxon>
        <taxon>Rodentia</taxon>
        <taxon>Myomorpha</taxon>
        <taxon>Muroidea</taxon>
        <taxon>Muridae</taxon>
        <taxon>Murinae</taxon>
        <taxon>Rattus</taxon>
    </lineage>
</organism>
<reference key="1">
    <citation type="journal article" date="1997" name="Biochem. Biophys. Res. Commun.">
        <title>Cloning and expression of the adenosine kinase gene from rat and human tissues.</title>
        <authorList>
            <person name="McNally T."/>
            <person name="Helfrich R.J."/>
            <person name="Cowart M."/>
            <person name="Dorwin S.A."/>
            <person name="Meuth J.L."/>
            <person name="Idler K.B."/>
            <person name="Klute K.A."/>
            <person name="Simmer R.L."/>
            <person name="Kowaluk E.A."/>
            <person name="Halbert D.N."/>
        </authorList>
    </citation>
    <scope>NUCLEOTIDE SEQUENCE [MRNA]</scope>
    <source>
        <strain>Sprague-Dawley</strain>
    </source>
</reference>
<reference key="2">
    <citation type="journal article" date="2004" name="Genome Res.">
        <title>The status, quality, and expansion of the NIH full-length cDNA project: the Mammalian Gene Collection (MGC).</title>
        <authorList>
            <consortium name="The MGC Project Team"/>
        </authorList>
    </citation>
    <scope>NUCLEOTIDE SEQUENCE [LARGE SCALE MRNA]</scope>
    <source>
        <tissue>Heart</tissue>
    </source>
</reference>
<reference key="3">
    <citation type="journal article" date="1996" name="Eur. J. Biochem.">
        <title>Cloning and characterization of cDNA for adenosine kinase from mammalian (Chinese hamster, mouse, human and rat) species. High frequency mutants of Chinese hamster ovary cells involve structural alterations in the gene.</title>
        <authorList>
            <person name="Singh B."/>
            <person name="Hao W."/>
            <person name="Wu Z.-C."/>
            <person name="Eigl B."/>
            <person name="Gupta R.S."/>
        </authorList>
    </citation>
    <scope>NUCLEOTIDE SEQUENCE [MRNA] OF 17-361</scope>
    <source>
        <tissue>Liver</tissue>
    </source>
</reference>
<reference key="4">
    <citation type="submission" date="2006-11" db="UniProtKB">
        <authorList>
            <person name="Lubec G."/>
            <person name="Afjehi-Sadat L."/>
        </authorList>
    </citation>
    <scope>PROTEIN SEQUENCE OF 88-110 AND 119-148</scope>
    <scope>IDENTIFICATION BY MASS SPECTROMETRY</scope>
    <source>
        <strain>Sprague-Dawley</strain>
        <tissue>Spinal cord</tissue>
    </source>
</reference>
<feature type="chain" id="PRO_0000080055" description="Adenosine kinase">
    <location>
        <begin position="1"/>
        <end position="361"/>
    </location>
</feature>
<feature type="short sequence motif" description="Nuclear localization signal" evidence="2">
    <location>
        <begin position="7"/>
        <end position="15"/>
    </location>
</feature>
<feature type="active site" evidence="2">
    <location>
        <position position="316"/>
    </location>
</feature>
<feature type="active site" description="Proton acceptor" evidence="2">
    <location>
        <position position="316"/>
    </location>
</feature>
<feature type="binding site" evidence="2">
    <location>
        <position position="34"/>
    </location>
    <ligand>
        <name>adenosine</name>
        <dbReference type="ChEBI" id="CHEBI:16335"/>
    </ligand>
</feature>
<feature type="binding site" evidence="2">
    <location>
        <position position="48"/>
    </location>
    <ligand>
        <name>Mg(2+)</name>
        <dbReference type="ChEBI" id="CHEBI:18420"/>
        <label>1</label>
    </ligand>
</feature>
<feature type="binding site" evidence="2">
    <location>
        <position position="147"/>
    </location>
    <ligand>
        <name>Mg(2+)</name>
        <dbReference type="ChEBI" id="CHEBI:18420"/>
        <label>2</label>
    </ligand>
</feature>
<feature type="binding site" evidence="2">
    <location>
        <position position="305"/>
    </location>
    <ligand>
        <name>adenosine</name>
        <dbReference type="ChEBI" id="CHEBI:16335"/>
    </ligand>
</feature>
<feature type="modified residue" description="Phosphotyrosine" evidence="2">
    <location>
        <position position="76"/>
    </location>
</feature>
<feature type="sequence conflict" description="In Ref. 3; AAB03110." evidence="3" ref="3">
    <original>D</original>
    <variation>N</variation>
    <location>
        <position position="121"/>
    </location>
</feature>
<feature type="sequence conflict" description="In Ref. 3; AAB03110." evidence="3" ref="3">
    <original>T</original>
    <variation>S</variation>
    <location>
        <position position="144"/>
    </location>
</feature>
<feature type="sequence conflict" description="In Ref. 3; AAB03110." evidence="3" ref="3">
    <original>A</original>
    <variation>R</variation>
    <location>
        <position position="155"/>
    </location>
</feature>
<feature type="sequence conflict" description="In Ref. 3; AAB03110." evidence="3" ref="3">
    <original>V</original>
    <variation>M</variation>
    <location>
        <position position="198"/>
    </location>
</feature>
<feature type="sequence conflict" description="In Ref. 3; AAB03110." evidence="3" ref="3">
    <original>FI</original>
    <variation>LL</variation>
    <location>
        <begin position="217"/>
        <end position="218"/>
    </location>
</feature>
<feature type="sequence conflict" description="In Ref. 3; AAB03110." evidence="3" ref="3">
    <original>E</original>
    <variation>A</variation>
    <location>
        <position position="228"/>
    </location>
</feature>
<feature type="sequence conflict" description="In Ref. 2; AAH81712." evidence="3" ref="2">
    <original>D</original>
    <variation>N</variation>
    <location>
        <position position="359"/>
    </location>
</feature>
<name>ADK_RAT</name>
<dbReference type="EC" id="2.7.1.20" evidence="2"/>
<dbReference type="EMBL" id="U90340">
    <property type="protein sequence ID" value="AAB50236.1"/>
    <property type="molecule type" value="mRNA"/>
</dbReference>
<dbReference type="EMBL" id="BC081712">
    <property type="protein sequence ID" value="AAH81712.1"/>
    <property type="molecule type" value="mRNA"/>
</dbReference>
<dbReference type="EMBL" id="U57042">
    <property type="protein sequence ID" value="AAB03110.1"/>
    <property type="molecule type" value="mRNA"/>
</dbReference>
<dbReference type="PIR" id="JC5362">
    <property type="entry name" value="JC5362"/>
</dbReference>
<dbReference type="RefSeq" id="NP_037027.2">
    <property type="nucleotide sequence ID" value="NM_012895.3"/>
</dbReference>
<dbReference type="SMR" id="Q64640"/>
<dbReference type="FunCoup" id="Q64640">
    <property type="interactions" value="2932"/>
</dbReference>
<dbReference type="STRING" id="10116.ENSRNOP00000073983"/>
<dbReference type="BindingDB" id="Q64640"/>
<dbReference type="ChEMBL" id="CHEMBL2384"/>
<dbReference type="iPTMnet" id="Q64640"/>
<dbReference type="PhosphoSitePlus" id="Q64640"/>
<dbReference type="jPOST" id="Q64640"/>
<dbReference type="PaxDb" id="10116-ENSRNOP00000016709"/>
<dbReference type="GeneID" id="25368"/>
<dbReference type="KEGG" id="rno:25368"/>
<dbReference type="UCSC" id="RGD:2046">
    <property type="organism name" value="rat"/>
</dbReference>
<dbReference type="AGR" id="RGD:2046"/>
<dbReference type="CTD" id="132"/>
<dbReference type="RGD" id="2046">
    <property type="gene designation" value="Adk"/>
</dbReference>
<dbReference type="eggNOG" id="KOG2854">
    <property type="taxonomic scope" value="Eukaryota"/>
</dbReference>
<dbReference type="InParanoid" id="Q64640"/>
<dbReference type="OrthoDB" id="432447at2759"/>
<dbReference type="PhylomeDB" id="Q64640"/>
<dbReference type="TreeFam" id="TF300745"/>
<dbReference type="Reactome" id="R-RNO-74217">
    <property type="pathway name" value="Purine salvage"/>
</dbReference>
<dbReference type="Reactome" id="R-RNO-9755088">
    <property type="pathway name" value="Ribavirin ADME"/>
</dbReference>
<dbReference type="UniPathway" id="UPA00588">
    <property type="reaction ID" value="UER00659"/>
</dbReference>
<dbReference type="PRO" id="PR:Q64640"/>
<dbReference type="Proteomes" id="UP000002494">
    <property type="component" value="Unplaced"/>
</dbReference>
<dbReference type="GO" id="GO:0005829">
    <property type="term" value="C:cytosol"/>
    <property type="evidence" value="ECO:0000266"/>
    <property type="project" value="RGD"/>
</dbReference>
<dbReference type="GO" id="GO:0005634">
    <property type="term" value="C:nucleus"/>
    <property type="evidence" value="ECO:0000266"/>
    <property type="project" value="RGD"/>
</dbReference>
<dbReference type="GO" id="GO:0004001">
    <property type="term" value="F:adenosine kinase activity"/>
    <property type="evidence" value="ECO:0000314"/>
    <property type="project" value="RGD"/>
</dbReference>
<dbReference type="GO" id="GO:0005524">
    <property type="term" value="F:ATP binding"/>
    <property type="evidence" value="ECO:0007669"/>
    <property type="project" value="UniProtKB-KW"/>
</dbReference>
<dbReference type="GO" id="GO:0004136">
    <property type="term" value="F:deoxyadenosine kinase activity"/>
    <property type="evidence" value="ECO:0000266"/>
    <property type="project" value="RGD"/>
</dbReference>
<dbReference type="GO" id="GO:0046872">
    <property type="term" value="F:metal ion binding"/>
    <property type="evidence" value="ECO:0007669"/>
    <property type="project" value="UniProtKB-KW"/>
</dbReference>
<dbReference type="GO" id="GO:0046085">
    <property type="term" value="P:adenosine metabolic process"/>
    <property type="evidence" value="ECO:0000314"/>
    <property type="project" value="RGD"/>
</dbReference>
<dbReference type="GO" id="GO:0044209">
    <property type="term" value="P:AMP salvage"/>
    <property type="evidence" value="ECO:0000266"/>
    <property type="project" value="RGD"/>
</dbReference>
<dbReference type="GO" id="GO:0032922">
    <property type="term" value="P:circadian regulation of gene expression"/>
    <property type="evidence" value="ECO:0000270"/>
    <property type="project" value="RGD"/>
</dbReference>
<dbReference type="GO" id="GO:0106383">
    <property type="term" value="P:dAMP salvage"/>
    <property type="evidence" value="ECO:0000266"/>
    <property type="project" value="RGD"/>
</dbReference>
<dbReference type="GO" id="GO:0006175">
    <property type="term" value="P:dATP biosynthetic process"/>
    <property type="evidence" value="ECO:0000266"/>
    <property type="project" value="RGD"/>
</dbReference>
<dbReference type="GO" id="GO:0032263">
    <property type="term" value="P:GMP salvage"/>
    <property type="evidence" value="ECO:0000266"/>
    <property type="project" value="RGD"/>
</dbReference>
<dbReference type="GO" id="GO:0010613">
    <property type="term" value="P:positive regulation of cardiac muscle hypertrophy"/>
    <property type="evidence" value="ECO:0000315"/>
    <property type="project" value="RGD"/>
</dbReference>
<dbReference type="GO" id="GO:0042102">
    <property type="term" value="P:positive regulation of T cell proliferation"/>
    <property type="evidence" value="ECO:0000315"/>
    <property type="project" value="RGD"/>
</dbReference>
<dbReference type="GO" id="GO:0006144">
    <property type="term" value="P:purine nucleobase metabolic process"/>
    <property type="evidence" value="ECO:0000318"/>
    <property type="project" value="GO_Central"/>
</dbReference>
<dbReference type="GO" id="GO:0006166">
    <property type="term" value="P:purine ribonucleoside salvage"/>
    <property type="evidence" value="ECO:0000266"/>
    <property type="project" value="RGD"/>
</dbReference>
<dbReference type="GO" id="GO:0044342">
    <property type="term" value="P:type B pancreatic cell proliferation"/>
    <property type="evidence" value="ECO:0000315"/>
    <property type="project" value="RGD"/>
</dbReference>
<dbReference type="CDD" id="cd01168">
    <property type="entry name" value="adenosine_kinase"/>
    <property type="match status" value="1"/>
</dbReference>
<dbReference type="FunFam" id="3.40.1190.20:FF:000175">
    <property type="entry name" value="Adenosine kinase"/>
    <property type="match status" value="1"/>
</dbReference>
<dbReference type="Gene3D" id="3.40.1190.20">
    <property type="match status" value="1"/>
</dbReference>
<dbReference type="InterPro" id="IPR001805">
    <property type="entry name" value="Adenokinase"/>
</dbReference>
<dbReference type="InterPro" id="IPR002173">
    <property type="entry name" value="Carboh/pur_kinase_PfkB_CS"/>
</dbReference>
<dbReference type="InterPro" id="IPR011611">
    <property type="entry name" value="PfkB_dom"/>
</dbReference>
<dbReference type="InterPro" id="IPR029056">
    <property type="entry name" value="Ribokinase-like"/>
</dbReference>
<dbReference type="PANTHER" id="PTHR45769">
    <property type="entry name" value="ADENOSINE KINASE"/>
    <property type="match status" value="1"/>
</dbReference>
<dbReference type="PANTHER" id="PTHR45769:SF3">
    <property type="entry name" value="ADENOSINE KINASE"/>
    <property type="match status" value="1"/>
</dbReference>
<dbReference type="Pfam" id="PF00294">
    <property type="entry name" value="PfkB"/>
    <property type="match status" value="1"/>
</dbReference>
<dbReference type="PRINTS" id="PR00989">
    <property type="entry name" value="ADENOKINASE"/>
</dbReference>
<dbReference type="SUPFAM" id="SSF53613">
    <property type="entry name" value="Ribokinase-like"/>
    <property type="match status" value="1"/>
</dbReference>
<dbReference type="PROSITE" id="PS00584">
    <property type="entry name" value="PFKB_KINASES_2"/>
    <property type="match status" value="1"/>
</dbReference>
<evidence type="ECO:0000250" key="1"/>
<evidence type="ECO:0000250" key="2">
    <source>
        <dbReference type="UniProtKB" id="P55263"/>
    </source>
</evidence>
<evidence type="ECO:0000305" key="3"/>
<sequence>MAAADEPKPKKLKVEAPEALSENVLFGMGNPLLDISAVVDKDFLDKYSLKPNDQILAEDKHKELFDELVKKFKVEYHAGGSTQNSMKVAQWMIQEPHRAATFFGCIGIDKFGEILKSKAADAHVDAHYYEQNEQPTGTCAACITGGNRSLVANLAAANCYKKEKHLDLENNWMLVEKARVYYIAGFFLTVSPESVLKVARYAAENNRTFTLNLSAPFISQFFKEALMEVMPYVDILFGNETEAATFAREQGFETKDIKEIARKTQALPKVNSKRQRTVIFTQGRDDTIVATGNDVTAFPVLDQNQEEIVDTNGAGDAFVGGFLSQLVSNKPLTECIRAGHYAASVIIRRTGCTFPEKPDFH</sequence>
<protein>
    <recommendedName>
        <fullName>Adenosine kinase</fullName>
        <shortName>AK</shortName>
        <ecNumber evidence="2">2.7.1.20</ecNumber>
    </recommendedName>
    <alternativeName>
        <fullName>Adenosine 5'-phosphotransferase</fullName>
    </alternativeName>
</protein>
<comment type="function">
    <text evidence="2">Catalyzes the phosphorylation of the purine nucleoside adenosine at the 5' position in an ATP-dependent manner. Serves as a potential regulator of concentrations of extracellular adenosine and intracellular adenine nucleotides.</text>
</comment>
<comment type="catalytic activity">
    <reaction evidence="2">
        <text>adenosine + ATP = AMP + ADP + H(+)</text>
        <dbReference type="Rhea" id="RHEA:20824"/>
        <dbReference type="ChEBI" id="CHEBI:15378"/>
        <dbReference type="ChEBI" id="CHEBI:16335"/>
        <dbReference type="ChEBI" id="CHEBI:30616"/>
        <dbReference type="ChEBI" id="CHEBI:456215"/>
        <dbReference type="ChEBI" id="CHEBI:456216"/>
        <dbReference type="EC" id="2.7.1.20"/>
    </reaction>
    <physiologicalReaction direction="left-to-right" evidence="2">
        <dbReference type="Rhea" id="RHEA:20825"/>
    </physiologicalReaction>
</comment>
<comment type="cofactor">
    <cofactor evidence="2">
        <name>Mg(2+)</name>
        <dbReference type="ChEBI" id="CHEBI:18420"/>
    </cofactor>
    <text evidence="2">Binds 3 Mg(2+) ions per subunit.</text>
</comment>
<comment type="pathway">
    <text>Purine metabolism; AMP biosynthesis via salvage pathway; AMP from adenosine: step 1/1.</text>
</comment>
<comment type="subunit">
    <text evidence="1">Monomer.</text>
</comment>
<comment type="subcellular location">
    <subcellularLocation>
        <location evidence="2">Nucleus</location>
    </subcellularLocation>
</comment>
<comment type="similarity">
    <text evidence="3">Belongs to the carbohydrate kinase PfkB family.</text>
</comment>
<accession>Q64640</accession>
<accession>O09162</accession>
<accession>Q642G1</accession>
<gene>
    <name type="primary">Adk</name>
</gene>
<proteinExistence type="evidence at protein level"/>
<keyword id="KW-0067">ATP-binding</keyword>
<keyword id="KW-0903">Direct protein sequencing</keyword>
<keyword id="KW-0418">Kinase</keyword>
<keyword id="KW-0460">Magnesium</keyword>
<keyword id="KW-0479">Metal-binding</keyword>
<keyword id="KW-0547">Nucleotide-binding</keyword>
<keyword id="KW-0539">Nucleus</keyword>
<keyword id="KW-0597">Phosphoprotein</keyword>
<keyword id="KW-0660">Purine salvage</keyword>
<keyword id="KW-1185">Reference proteome</keyword>
<keyword id="KW-0808">Transferase</keyword>